<evidence type="ECO:0000255" key="1">
    <source>
        <dbReference type="HAMAP-Rule" id="MF_00086"/>
    </source>
</evidence>
<name>METK_LISMO</name>
<keyword id="KW-0067">ATP-binding</keyword>
<keyword id="KW-0963">Cytoplasm</keyword>
<keyword id="KW-0460">Magnesium</keyword>
<keyword id="KW-0479">Metal-binding</keyword>
<keyword id="KW-0547">Nucleotide-binding</keyword>
<keyword id="KW-0554">One-carbon metabolism</keyword>
<keyword id="KW-0630">Potassium</keyword>
<keyword id="KW-1185">Reference proteome</keyword>
<keyword id="KW-0808">Transferase</keyword>
<organism>
    <name type="scientific">Listeria monocytogenes serovar 1/2a (strain ATCC BAA-679 / EGD-e)</name>
    <dbReference type="NCBI Taxonomy" id="169963"/>
    <lineage>
        <taxon>Bacteria</taxon>
        <taxon>Bacillati</taxon>
        <taxon>Bacillota</taxon>
        <taxon>Bacilli</taxon>
        <taxon>Bacillales</taxon>
        <taxon>Listeriaceae</taxon>
        <taxon>Listeria</taxon>
    </lineage>
</organism>
<sequence length="399" mass="43551">MAKNRHLFTSESVSDGHPDKIADQISDAILDAIISKDPDARVACETTVTTGLVLVAGEITTSVYVDIPKIVRDTIKEIGYTRAKYGFDAETCAVLTAIDEQSPDIAQGVDEALESRSGNEIDAAIEAIGAGDQGLMFGFATDETEELMPLPIFLAHGLARKLTELRKTNKLDYLRPDAKTQVTVEYDEFNQPVRIDTIVVSTQHHPDITQEQIAKDLHTYLFPEVIDASFLDEDTKYFINPTGRFVIGGPLGDAGLTGRKIIVDTYGGYARHGGGAFSGKDPTKVDRSGAYAARYVAKNIVAAGLAKKVEVQVAYAIGVARPVSISIDTYGTSDYSEQELIDGVNALFDLRPAGIIHMLDLRRPIYRQTAAFGHFGRSDLDLPWERTDKAEALKKLIVK</sequence>
<protein>
    <recommendedName>
        <fullName evidence="1">S-adenosylmethionine synthase</fullName>
        <shortName evidence="1">AdoMet synthase</shortName>
        <ecNumber evidence="1">2.5.1.6</ecNumber>
    </recommendedName>
    <alternativeName>
        <fullName evidence="1">MAT</fullName>
    </alternativeName>
    <alternativeName>
        <fullName evidence="1">Methionine adenosyltransferase</fullName>
    </alternativeName>
</protein>
<accession>Q8Y6M0</accession>
<comment type="function">
    <text evidence="1">Catalyzes the formation of S-adenosylmethionine (AdoMet) from methionine and ATP. The overall synthetic reaction is composed of two sequential steps, AdoMet formation and the subsequent tripolyphosphate hydrolysis which occurs prior to release of AdoMet from the enzyme.</text>
</comment>
<comment type="catalytic activity">
    <reaction evidence="1">
        <text>L-methionine + ATP + H2O = S-adenosyl-L-methionine + phosphate + diphosphate</text>
        <dbReference type="Rhea" id="RHEA:21080"/>
        <dbReference type="ChEBI" id="CHEBI:15377"/>
        <dbReference type="ChEBI" id="CHEBI:30616"/>
        <dbReference type="ChEBI" id="CHEBI:33019"/>
        <dbReference type="ChEBI" id="CHEBI:43474"/>
        <dbReference type="ChEBI" id="CHEBI:57844"/>
        <dbReference type="ChEBI" id="CHEBI:59789"/>
        <dbReference type="EC" id="2.5.1.6"/>
    </reaction>
</comment>
<comment type="cofactor">
    <cofactor evidence="1">
        <name>Mg(2+)</name>
        <dbReference type="ChEBI" id="CHEBI:18420"/>
    </cofactor>
    <text evidence="1">Binds 2 divalent ions per subunit.</text>
</comment>
<comment type="cofactor">
    <cofactor evidence="1">
        <name>K(+)</name>
        <dbReference type="ChEBI" id="CHEBI:29103"/>
    </cofactor>
    <text evidence="1">Binds 1 potassium ion per subunit.</text>
</comment>
<comment type="pathway">
    <text evidence="1">Amino-acid biosynthesis; S-adenosyl-L-methionine biosynthesis; S-adenosyl-L-methionine from L-methionine: step 1/1.</text>
</comment>
<comment type="subunit">
    <text evidence="1">Homotetramer; dimer of dimers.</text>
</comment>
<comment type="subcellular location">
    <subcellularLocation>
        <location evidence="1">Cytoplasm</location>
    </subcellularLocation>
</comment>
<comment type="similarity">
    <text evidence="1">Belongs to the AdoMet synthase family.</text>
</comment>
<reference key="1">
    <citation type="journal article" date="2001" name="Science">
        <title>Comparative genomics of Listeria species.</title>
        <authorList>
            <person name="Glaser P."/>
            <person name="Frangeul L."/>
            <person name="Buchrieser C."/>
            <person name="Rusniok C."/>
            <person name="Amend A."/>
            <person name="Baquero F."/>
            <person name="Berche P."/>
            <person name="Bloecker H."/>
            <person name="Brandt P."/>
            <person name="Chakraborty T."/>
            <person name="Charbit A."/>
            <person name="Chetouani F."/>
            <person name="Couve E."/>
            <person name="de Daruvar A."/>
            <person name="Dehoux P."/>
            <person name="Domann E."/>
            <person name="Dominguez-Bernal G."/>
            <person name="Duchaud E."/>
            <person name="Durant L."/>
            <person name="Dussurget O."/>
            <person name="Entian K.-D."/>
            <person name="Fsihi H."/>
            <person name="Garcia-del Portillo F."/>
            <person name="Garrido P."/>
            <person name="Gautier L."/>
            <person name="Goebel W."/>
            <person name="Gomez-Lopez N."/>
            <person name="Hain T."/>
            <person name="Hauf J."/>
            <person name="Jackson D."/>
            <person name="Jones L.-M."/>
            <person name="Kaerst U."/>
            <person name="Kreft J."/>
            <person name="Kuhn M."/>
            <person name="Kunst F."/>
            <person name="Kurapkat G."/>
            <person name="Madueno E."/>
            <person name="Maitournam A."/>
            <person name="Mata Vicente J."/>
            <person name="Ng E."/>
            <person name="Nedjari H."/>
            <person name="Nordsiek G."/>
            <person name="Novella S."/>
            <person name="de Pablos B."/>
            <person name="Perez-Diaz J.-C."/>
            <person name="Purcell R."/>
            <person name="Remmel B."/>
            <person name="Rose M."/>
            <person name="Schlueter T."/>
            <person name="Simoes N."/>
            <person name="Tierrez A."/>
            <person name="Vazquez-Boland J.-A."/>
            <person name="Voss H."/>
            <person name="Wehland J."/>
            <person name="Cossart P."/>
        </authorList>
    </citation>
    <scope>NUCLEOTIDE SEQUENCE [LARGE SCALE GENOMIC DNA]</scope>
    <source>
        <strain>ATCC BAA-679 / EGD-e</strain>
    </source>
</reference>
<gene>
    <name evidence="1" type="primary">metK</name>
    <name type="ordered locus">lmo1664</name>
</gene>
<feature type="chain" id="PRO_0000174545" description="S-adenosylmethionine synthase">
    <location>
        <begin position="1"/>
        <end position="399"/>
    </location>
</feature>
<feature type="region of interest" description="Flexible loop" evidence="1">
    <location>
        <begin position="101"/>
        <end position="111"/>
    </location>
</feature>
<feature type="binding site" description="in other chain" evidence="1">
    <location>
        <position position="17"/>
    </location>
    <ligand>
        <name>ATP</name>
        <dbReference type="ChEBI" id="CHEBI:30616"/>
        <note>ligand shared between two neighboring subunits</note>
    </ligand>
</feature>
<feature type="binding site" evidence="1">
    <location>
        <position position="19"/>
    </location>
    <ligand>
        <name>Mg(2+)</name>
        <dbReference type="ChEBI" id="CHEBI:18420"/>
    </ligand>
</feature>
<feature type="binding site" evidence="1">
    <location>
        <position position="45"/>
    </location>
    <ligand>
        <name>K(+)</name>
        <dbReference type="ChEBI" id="CHEBI:29103"/>
    </ligand>
</feature>
<feature type="binding site" description="in other chain" evidence="1">
    <location>
        <position position="58"/>
    </location>
    <ligand>
        <name>L-methionine</name>
        <dbReference type="ChEBI" id="CHEBI:57844"/>
        <note>ligand shared between two neighboring subunits</note>
    </ligand>
</feature>
<feature type="binding site" description="in other chain" evidence="1">
    <location>
        <position position="101"/>
    </location>
    <ligand>
        <name>L-methionine</name>
        <dbReference type="ChEBI" id="CHEBI:57844"/>
        <note>ligand shared between two neighboring subunits</note>
    </ligand>
</feature>
<feature type="binding site" description="in other chain" evidence="1">
    <location>
        <begin position="177"/>
        <end position="179"/>
    </location>
    <ligand>
        <name>ATP</name>
        <dbReference type="ChEBI" id="CHEBI:30616"/>
        <note>ligand shared between two neighboring subunits</note>
    </ligand>
</feature>
<feature type="binding site" description="in other chain" evidence="1">
    <location>
        <begin position="244"/>
        <end position="245"/>
    </location>
    <ligand>
        <name>ATP</name>
        <dbReference type="ChEBI" id="CHEBI:30616"/>
        <note>ligand shared between two neighboring subunits</note>
    </ligand>
</feature>
<feature type="binding site" evidence="1">
    <location>
        <position position="253"/>
    </location>
    <ligand>
        <name>ATP</name>
        <dbReference type="ChEBI" id="CHEBI:30616"/>
        <note>ligand shared between two neighboring subunits</note>
    </ligand>
</feature>
<feature type="binding site" evidence="1">
    <location>
        <position position="253"/>
    </location>
    <ligand>
        <name>L-methionine</name>
        <dbReference type="ChEBI" id="CHEBI:57844"/>
        <note>ligand shared between two neighboring subunits</note>
    </ligand>
</feature>
<feature type="binding site" description="in other chain" evidence="1">
    <location>
        <begin position="259"/>
        <end position="260"/>
    </location>
    <ligand>
        <name>ATP</name>
        <dbReference type="ChEBI" id="CHEBI:30616"/>
        <note>ligand shared between two neighboring subunits</note>
    </ligand>
</feature>
<feature type="binding site" evidence="1">
    <location>
        <position position="276"/>
    </location>
    <ligand>
        <name>ATP</name>
        <dbReference type="ChEBI" id="CHEBI:30616"/>
        <note>ligand shared between two neighboring subunits</note>
    </ligand>
</feature>
<feature type="binding site" evidence="1">
    <location>
        <position position="280"/>
    </location>
    <ligand>
        <name>ATP</name>
        <dbReference type="ChEBI" id="CHEBI:30616"/>
        <note>ligand shared between two neighboring subunits</note>
    </ligand>
</feature>
<feature type="binding site" description="in other chain" evidence="1">
    <location>
        <position position="284"/>
    </location>
    <ligand>
        <name>L-methionine</name>
        <dbReference type="ChEBI" id="CHEBI:57844"/>
        <note>ligand shared between two neighboring subunits</note>
    </ligand>
</feature>
<dbReference type="EC" id="2.5.1.6" evidence="1"/>
<dbReference type="EMBL" id="AL591980">
    <property type="protein sequence ID" value="CAC99742.1"/>
    <property type="molecule type" value="Genomic_DNA"/>
</dbReference>
<dbReference type="PIR" id="AH1282">
    <property type="entry name" value="AH1282"/>
</dbReference>
<dbReference type="RefSeq" id="NP_465189.1">
    <property type="nucleotide sequence ID" value="NC_003210.1"/>
</dbReference>
<dbReference type="RefSeq" id="WP_003733830.1">
    <property type="nucleotide sequence ID" value="NZ_CP149495.1"/>
</dbReference>
<dbReference type="SMR" id="Q8Y6M0"/>
<dbReference type="STRING" id="169963.gene:17594321"/>
<dbReference type="PaxDb" id="169963-lmo1664"/>
<dbReference type="EnsemblBacteria" id="CAC99742">
    <property type="protein sequence ID" value="CAC99742"/>
    <property type="gene ID" value="CAC99742"/>
</dbReference>
<dbReference type="GeneID" id="985664"/>
<dbReference type="KEGG" id="lmo:lmo1664"/>
<dbReference type="PATRIC" id="fig|169963.11.peg.1707"/>
<dbReference type="eggNOG" id="COG0192">
    <property type="taxonomic scope" value="Bacteria"/>
</dbReference>
<dbReference type="HOGENOM" id="CLU_041802_1_1_9"/>
<dbReference type="OrthoDB" id="9801686at2"/>
<dbReference type="PhylomeDB" id="Q8Y6M0"/>
<dbReference type="BioCyc" id="LMON169963:LMO1664-MONOMER"/>
<dbReference type="UniPathway" id="UPA00315">
    <property type="reaction ID" value="UER00080"/>
</dbReference>
<dbReference type="Proteomes" id="UP000000817">
    <property type="component" value="Chromosome"/>
</dbReference>
<dbReference type="GO" id="GO:0005829">
    <property type="term" value="C:cytosol"/>
    <property type="evidence" value="ECO:0000318"/>
    <property type="project" value="GO_Central"/>
</dbReference>
<dbReference type="GO" id="GO:0005524">
    <property type="term" value="F:ATP binding"/>
    <property type="evidence" value="ECO:0007669"/>
    <property type="project" value="UniProtKB-UniRule"/>
</dbReference>
<dbReference type="GO" id="GO:0000287">
    <property type="term" value="F:magnesium ion binding"/>
    <property type="evidence" value="ECO:0007669"/>
    <property type="project" value="UniProtKB-UniRule"/>
</dbReference>
<dbReference type="GO" id="GO:0004478">
    <property type="term" value="F:methionine adenosyltransferase activity"/>
    <property type="evidence" value="ECO:0000318"/>
    <property type="project" value="GO_Central"/>
</dbReference>
<dbReference type="GO" id="GO:0006730">
    <property type="term" value="P:one-carbon metabolic process"/>
    <property type="evidence" value="ECO:0007669"/>
    <property type="project" value="UniProtKB-KW"/>
</dbReference>
<dbReference type="GO" id="GO:0006556">
    <property type="term" value="P:S-adenosylmethionine biosynthetic process"/>
    <property type="evidence" value="ECO:0000318"/>
    <property type="project" value="GO_Central"/>
</dbReference>
<dbReference type="CDD" id="cd18079">
    <property type="entry name" value="S-AdoMet_synt"/>
    <property type="match status" value="1"/>
</dbReference>
<dbReference type="FunFam" id="3.30.300.10:FF:000003">
    <property type="entry name" value="S-adenosylmethionine synthase"/>
    <property type="match status" value="1"/>
</dbReference>
<dbReference type="FunFam" id="3.30.300.10:FF:000004">
    <property type="entry name" value="S-adenosylmethionine synthase"/>
    <property type="match status" value="1"/>
</dbReference>
<dbReference type="Gene3D" id="3.30.300.10">
    <property type="match status" value="3"/>
</dbReference>
<dbReference type="HAMAP" id="MF_00086">
    <property type="entry name" value="S_AdoMet_synth1"/>
    <property type="match status" value="1"/>
</dbReference>
<dbReference type="InterPro" id="IPR022631">
    <property type="entry name" value="ADOMET_SYNTHASE_CS"/>
</dbReference>
<dbReference type="InterPro" id="IPR022630">
    <property type="entry name" value="S-AdoMet_synt_C"/>
</dbReference>
<dbReference type="InterPro" id="IPR022629">
    <property type="entry name" value="S-AdoMet_synt_central"/>
</dbReference>
<dbReference type="InterPro" id="IPR022628">
    <property type="entry name" value="S-AdoMet_synt_N"/>
</dbReference>
<dbReference type="InterPro" id="IPR002133">
    <property type="entry name" value="S-AdoMet_synthetase"/>
</dbReference>
<dbReference type="InterPro" id="IPR022636">
    <property type="entry name" value="S-AdoMet_synthetase_sfam"/>
</dbReference>
<dbReference type="NCBIfam" id="TIGR01034">
    <property type="entry name" value="metK"/>
    <property type="match status" value="1"/>
</dbReference>
<dbReference type="PANTHER" id="PTHR11964">
    <property type="entry name" value="S-ADENOSYLMETHIONINE SYNTHETASE"/>
    <property type="match status" value="1"/>
</dbReference>
<dbReference type="Pfam" id="PF02773">
    <property type="entry name" value="S-AdoMet_synt_C"/>
    <property type="match status" value="1"/>
</dbReference>
<dbReference type="Pfam" id="PF02772">
    <property type="entry name" value="S-AdoMet_synt_M"/>
    <property type="match status" value="1"/>
</dbReference>
<dbReference type="Pfam" id="PF00438">
    <property type="entry name" value="S-AdoMet_synt_N"/>
    <property type="match status" value="1"/>
</dbReference>
<dbReference type="PIRSF" id="PIRSF000497">
    <property type="entry name" value="MAT"/>
    <property type="match status" value="1"/>
</dbReference>
<dbReference type="SUPFAM" id="SSF55973">
    <property type="entry name" value="S-adenosylmethionine synthetase"/>
    <property type="match status" value="3"/>
</dbReference>
<dbReference type="PROSITE" id="PS00376">
    <property type="entry name" value="ADOMET_SYNTHASE_1"/>
    <property type="match status" value="1"/>
</dbReference>
<dbReference type="PROSITE" id="PS00377">
    <property type="entry name" value="ADOMET_SYNTHASE_2"/>
    <property type="match status" value="1"/>
</dbReference>
<proteinExistence type="inferred from homology"/>